<accession>Q31VN3</accession>
<organism>
    <name type="scientific">Shigella boydii serotype 4 (strain Sb227)</name>
    <dbReference type="NCBI Taxonomy" id="300268"/>
    <lineage>
        <taxon>Bacteria</taxon>
        <taxon>Pseudomonadati</taxon>
        <taxon>Pseudomonadota</taxon>
        <taxon>Gammaproteobacteria</taxon>
        <taxon>Enterobacterales</taxon>
        <taxon>Enterobacteriaceae</taxon>
        <taxon>Shigella</taxon>
    </lineage>
</organism>
<feature type="chain" id="PRO_0000238089" description="33 kDa chaperonin">
    <location>
        <begin position="1"/>
        <end position="292"/>
    </location>
</feature>
<feature type="disulfide bond" description="Redox-active" evidence="1">
    <location>
        <begin position="230"/>
        <end position="232"/>
    </location>
</feature>
<feature type="disulfide bond" description="Redox-active" evidence="1">
    <location>
        <begin position="263"/>
        <end position="266"/>
    </location>
</feature>
<proteinExistence type="inferred from homology"/>
<keyword id="KW-0143">Chaperone</keyword>
<keyword id="KW-0963">Cytoplasm</keyword>
<keyword id="KW-1015">Disulfide bond</keyword>
<keyword id="KW-0676">Redox-active center</keyword>
<keyword id="KW-0862">Zinc</keyword>
<dbReference type="EMBL" id="CP000036">
    <property type="protein sequence ID" value="ABB67875.1"/>
    <property type="status" value="ALT_INIT"/>
    <property type="molecule type" value="Genomic_DNA"/>
</dbReference>
<dbReference type="RefSeq" id="WP_004987087.1">
    <property type="nucleotide sequence ID" value="NC_007613.1"/>
</dbReference>
<dbReference type="SMR" id="Q31VN3"/>
<dbReference type="KEGG" id="sbo:SBO_3388"/>
<dbReference type="HOGENOM" id="CLU_054493_0_0_6"/>
<dbReference type="Proteomes" id="UP000007067">
    <property type="component" value="Chromosome"/>
</dbReference>
<dbReference type="GO" id="GO:0005737">
    <property type="term" value="C:cytoplasm"/>
    <property type="evidence" value="ECO:0007669"/>
    <property type="project" value="UniProtKB-SubCell"/>
</dbReference>
<dbReference type="GO" id="GO:0044183">
    <property type="term" value="F:protein folding chaperone"/>
    <property type="evidence" value="ECO:0007669"/>
    <property type="project" value="TreeGrafter"/>
</dbReference>
<dbReference type="GO" id="GO:0051082">
    <property type="term" value="F:unfolded protein binding"/>
    <property type="evidence" value="ECO:0007669"/>
    <property type="project" value="UniProtKB-UniRule"/>
</dbReference>
<dbReference type="GO" id="GO:0042026">
    <property type="term" value="P:protein refolding"/>
    <property type="evidence" value="ECO:0007669"/>
    <property type="project" value="TreeGrafter"/>
</dbReference>
<dbReference type="CDD" id="cd00498">
    <property type="entry name" value="Hsp33"/>
    <property type="match status" value="1"/>
</dbReference>
<dbReference type="FunFam" id="3.55.30.10:FF:000001">
    <property type="entry name" value="33 kDa chaperonin"/>
    <property type="match status" value="1"/>
</dbReference>
<dbReference type="Gene3D" id="1.10.287.480">
    <property type="entry name" value="helix hairpin bin"/>
    <property type="match status" value="1"/>
</dbReference>
<dbReference type="Gene3D" id="3.55.30.10">
    <property type="entry name" value="Hsp33 domain"/>
    <property type="match status" value="1"/>
</dbReference>
<dbReference type="Gene3D" id="3.90.1280.10">
    <property type="entry name" value="HSP33 redox switch-like"/>
    <property type="match status" value="1"/>
</dbReference>
<dbReference type="HAMAP" id="MF_00117">
    <property type="entry name" value="HslO"/>
    <property type="match status" value="1"/>
</dbReference>
<dbReference type="InterPro" id="IPR000397">
    <property type="entry name" value="Heat_shock_Hsp33"/>
</dbReference>
<dbReference type="InterPro" id="IPR016154">
    <property type="entry name" value="Heat_shock_Hsp33_C"/>
</dbReference>
<dbReference type="InterPro" id="IPR016153">
    <property type="entry name" value="Heat_shock_Hsp33_N"/>
</dbReference>
<dbReference type="InterPro" id="IPR023212">
    <property type="entry name" value="Hsp33_helix_hairpin_bin_dom_sf"/>
</dbReference>
<dbReference type="NCBIfam" id="NF001033">
    <property type="entry name" value="PRK00114.1"/>
    <property type="match status" value="1"/>
</dbReference>
<dbReference type="PANTHER" id="PTHR30111">
    <property type="entry name" value="33 KDA CHAPERONIN"/>
    <property type="match status" value="1"/>
</dbReference>
<dbReference type="PANTHER" id="PTHR30111:SF1">
    <property type="entry name" value="33 KDA CHAPERONIN"/>
    <property type="match status" value="1"/>
</dbReference>
<dbReference type="Pfam" id="PF01430">
    <property type="entry name" value="HSP33"/>
    <property type="match status" value="1"/>
</dbReference>
<dbReference type="PIRSF" id="PIRSF005261">
    <property type="entry name" value="Heat_shock_Hsp33"/>
    <property type="match status" value="1"/>
</dbReference>
<dbReference type="SUPFAM" id="SSF64397">
    <property type="entry name" value="Hsp33 domain"/>
    <property type="match status" value="1"/>
</dbReference>
<dbReference type="SUPFAM" id="SSF118352">
    <property type="entry name" value="HSP33 redox switch-like"/>
    <property type="match status" value="1"/>
</dbReference>
<comment type="function">
    <text evidence="1">Redox regulated molecular chaperone. Protects both thermally unfolding and oxidatively damaged proteins from irreversible aggregation. Plays an important role in the bacterial defense system toward oxidative stress.</text>
</comment>
<comment type="subcellular location">
    <subcellularLocation>
        <location evidence="1">Cytoplasm</location>
    </subcellularLocation>
</comment>
<comment type="PTM">
    <text evidence="1">Under oxidizing conditions two disulfide bonds are formed involving the reactive cysteines. Under reducing conditions zinc is bound to the reactive cysteines and the protein is inactive.</text>
</comment>
<comment type="similarity">
    <text evidence="1">Belongs to the HSP33 family.</text>
</comment>
<comment type="sequence caution" evidence="2">
    <conflict type="erroneous initiation">
        <sequence resource="EMBL-CDS" id="ABB67875"/>
    </conflict>
</comment>
<gene>
    <name evidence="1" type="primary">hslO</name>
    <name type="ordered locus">SBO_3388</name>
</gene>
<reference key="1">
    <citation type="journal article" date="2005" name="Nucleic Acids Res.">
        <title>Genome dynamics and diversity of Shigella species, the etiologic agents of bacillary dysentery.</title>
        <authorList>
            <person name="Yang F."/>
            <person name="Yang J."/>
            <person name="Zhang X."/>
            <person name="Chen L."/>
            <person name="Jiang Y."/>
            <person name="Yan Y."/>
            <person name="Tang X."/>
            <person name="Wang J."/>
            <person name="Xiong Z."/>
            <person name="Dong J."/>
            <person name="Xue Y."/>
            <person name="Zhu Y."/>
            <person name="Xu X."/>
            <person name="Sun L."/>
            <person name="Chen S."/>
            <person name="Nie H."/>
            <person name="Peng J."/>
            <person name="Xu J."/>
            <person name="Wang Y."/>
            <person name="Yuan Z."/>
            <person name="Wen Y."/>
            <person name="Yao Z."/>
            <person name="Shen Y."/>
            <person name="Qiang B."/>
            <person name="Hou Y."/>
            <person name="Yu J."/>
            <person name="Jin Q."/>
        </authorList>
    </citation>
    <scope>NUCLEOTIDE SEQUENCE [LARGE SCALE GENOMIC DNA]</scope>
    <source>
        <strain>Sb227</strain>
    </source>
</reference>
<protein>
    <recommendedName>
        <fullName evidence="1">33 kDa chaperonin</fullName>
    </recommendedName>
    <alternativeName>
        <fullName evidence="1">Heat shock protein 33 homolog</fullName>
        <shortName evidence="1">HSP33</shortName>
    </alternativeName>
</protein>
<evidence type="ECO:0000255" key="1">
    <source>
        <dbReference type="HAMAP-Rule" id="MF_00117"/>
    </source>
</evidence>
<evidence type="ECO:0000305" key="2"/>
<sequence length="292" mass="32515">MPQHDQLHRYLFENFAVRGELVTVSETLQQILENHDYPQPVKNVLAELLVATSLLTATLKFDGDITVQLQGDGPMNLAVINGNNNQQMRGVARVQGEIPENADLKTLVGNGYVVITITPSEGERYQGVVGLEGDTLAACLEDYFMRSEQLPTRLFIRTGDVDGKPAAGGMLLQVMPAQNAQQDDFDHLATLTETIKTEELLTLPANEVLWRLYHEEEVTVYDPQDVEFKCTCSREHCADALKTLPDEEVDSILAEDGEIDMHCDYCGNHYLFNAMDIAEIRNNASPADPQVH</sequence>
<name>HSLO_SHIBS</name>